<evidence type="ECO:0000305" key="1"/>
<protein>
    <recommendedName>
        <fullName>E1B protein, small T-antigen</fullName>
    </recommendedName>
    <alternativeName>
        <fullName>E1B 19 kDa protein</fullName>
        <shortName>E1B-19K</shortName>
    </alternativeName>
</protein>
<organismHost>
    <name type="scientific">Canis lupus familiaris</name>
    <name type="common">Dog</name>
    <name type="synonym">Canis familiaris</name>
    <dbReference type="NCBI Taxonomy" id="9615"/>
</organismHost>
<sequence>MDPLKICENYLTFRAIIRGSTLSPGFFRRWCFPALADVVGNIVEQEEGRFWQILPENHAFWGLLRRGFTVASFTEIITAAQLENRGRQLAFLAFISFLLRNWPSDSVVPEADRLDLVCAPAWSRMQIWSQTARLINDLQDSVLEEQGSAEEEECEEALLAGDSDDPLFG</sequence>
<comment type="similarity">
    <text evidence="1">Belongs to the adenoviridae E1B 19 kDa protein family.</text>
</comment>
<comment type="sequence caution" evidence="1">
    <conflict type="frameshift">
        <sequence resource="EMBL-CDS" id="AAA42471"/>
    </conflict>
</comment>
<accession>P14265</accession>
<accession>P87551</accession>
<dbReference type="EMBL" id="J04368">
    <property type="protein sequence ID" value="AAA42471.1"/>
    <property type="status" value="ALT_FRAME"/>
    <property type="molecule type" value="Genomic_DNA"/>
</dbReference>
<dbReference type="EMBL" id="U77082">
    <property type="protein sequence ID" value="AAB38712.1"/>
    <property type="molecule type" value="Genomic_DNA"/>
</dbReference>
<dbReference type="PIR" id="B34165">
    <property type="entry name" value="WMADN2"/>
</dbReference>
<dbReference type="RefSeq" id="AP_000609.1">
    <property type="nucleotide sequence ID" value="AC_000020.1"/>
</dbReference>
<dbReference type="Proteomes" id="UP000118097">
    <property type="component" value="Segment"/>
</dbReference>
<dbReference type="GO" id="GO:0033668">
    <property type="term" value="P:symbiont-mediated suppression of host apoptosis"/>
    <property type="evidence" value="ECO:0007669"/>
    <property type="project" value="UniProtKB-KW"/>
</dbReference>
<dbReference type="InterPro" id="IPR002924">
    <property type="entry name" value="Adenovir_t-Ag_E1B_19kDa"/>
</dbReference>
<dbReference type="InterPro" id="IPR002475">
    <property type="entry name" value="Bcl2-like"/>
</dbReference>
<dbReference type="Pfam" id="PF01691">
    <property type="entry name" value="Adeno_E1B_19K"/>
    <property type="match status" value="1"/>
</dbReference>
<dbReference type="PROSITE" id="PS50062">
    <property type="entry name" value="BCL2_FAMILY"/>
    <property type="match status" value="1"/>
</dbReference>
<feature type="chain" id="PRO_0000221720" description="E1B protein, small T-antigen">
    <location>
        <begin position="1"/>
        <end position="169"/>
    </location>
</feature>
<name>E1BS_ADECT</name>
<keyword id="KW-0244">Early protein</keyword>
<keyword id="KW-0945">Host-virus interaction</keyword>
<keyword id="KW-1081">Inhibition of host apoptosis by viral BCL2-like protein</keyword>
<keyword id="KW-1119">Modulation of host cell apoptosis by virus</keyword>
<keyword id="KW-1185">Reference proteome</keyword>
<proteinExistence type="inferred from homology"/>
<reference key="1">
    <citation type="journal article" date="1989" name="Virology">
        <title>Nucleotide sequence of E1 region of canine adenovirus type 2.</title>
        <authorList>
            <person name="Shibata R."/>
            <person name="Shinagawa M."/>
            <person name="Iida Y."/>
            <person name="Tsukiyama T."/>
        </authorList>
    </citation>
    <scope>NUCLEOTIDE SEQUENCE [GENOMIC DNA]</scope>
</reference>
<reference key="2">
    <citation type="submission" date="1996-12" db="EMBL/GenBank/DDBJ databases">
        <title>Complete DNA sequence and genomic organization of canine adenovirus type 2.</title>
        <authorList>
            <person name="Campbell J.B."/>
            <person name="Zhao Y."/>
        </authorList>
    </citation>
    <scope>NUCLEOTIDE SEQUENCE [LARGE SCALE GENOMIC DNA]</scope>
</reference>
<reference key="3">
    <citation type="journal article" date="2003" name="J. Gen. Virol.">
        <title>Genetic content and evolution of adenoviruses.</title>
        <authorList>
            <person name="Davison A.J."/>
            <person name="Benko M."/>
            <person name="Harrach B."/>
        </authorList>
    </citation>
    <scope>GENOME ANNOTATION</scope>
</reference>
<organism>
    <name type="scientific">Canine adenovirus serotype 2 (strain Toronto A 26-61)</name>
    <name type="common">CAdV-2</name>
    <name type="synonym">Canine adenovirus 2 (strain Toronto A 26-61)</name>
    <dbReference type="NCBI Taxonomy" id="69152"/>
    <lineage>
        <taxon>Viruses</taxon>
        <taxon>Varidnaviria</taxon>
        <taxon>Bamfordvirae</taxon>
        <taxon>Preplasmiviricota</taxon>
        <taxon>Tectiliviricetes</taxon>
        <taxon>Rowavirales</taxon>
        <taxon>Adenoviridae</taxon>
        <taxon>Mastadenovirus</taxon>
        <taxon>Canine mastadenovirus A</taxon>
    </lineage>
</organism>